<name>RL36_STRM5</name>
<proteinExistence type="inferred from homology"/>
<organism>
    <name type="scientific">Stenotrophomonas maltophilia (strain R551-3)</name>
    <dbReference type="NCBI Taxonomy" id="391008"/>
    <lineage>
        <taxon>Bacteria</taxon>
        <taxon>Pseudomonadati</taxon>
        <taxon>Pseudomonadota</taxon>
        <taxon>Gammaproteobacteria</taxon>
        <taxon>Lysobacterales</taxon>
        <taxon>Lysobacteraceae</taxon>
        <taxon>Stenotrophomonas</taxon>
        <taxon>Stenotrophomonas maltophilia group</taxon>
    </lineage>
</organism>
<feature type="chain" id="PRO_1000101073" description="Large ribosomal subunit protein bL36">
    <location>
        <begin position="1"/>
        <end position="41"/>
    </location>
</feature>
<evidence type="ECO:0000255" key="1">
    <source>
        <dbReference type="HAMAP-Rule" id="MF_00251"/>
    </source>
</evidence>
<evidence type="ECO:0000305" key="2"/>
<dbReference type="EMBL" id="CP001111">
    <property type="protein sequence ID" value="ACF51349.1"/>
    <property type="molecule type" value="Genomic_DNA"/>
</dbReference>
<dbReference type="SMR" id="B4SSV0"/>
<dbReference type="STRING" id="391008.Smal_1644"/>
<dbReference type="KEGG" id="smt:Smal_1644"/>
<dbReference type="eggNOG" id="COG0257">
    <property type="taxonomic scope" value="Bacteria"/>
</dbReference>
<dbReference type="HOGENOM" id="CLU_135723_3_3_6"/>
<dbReference type="OrthoDB" id="9801558at2"/>
<dbReference type="Proteomes" id="UP000001867">
    <property type="component" value="Chromosome"/>
</dbReference>
<dbReference type="GO" id="GO:1990904">
    <property type="term" value="C:ribonucleoprotein complex"/>
    <property type="evidence" value="ECO:0007669"/>
    <property type="project" value="UniProtKB-KW"/>
</dbReference>
<dbReference type="GO" id="GO:0005840">
    <property type="term" value="C:ribosome"/>
    <property type="evidence" value="ECO:0007669"/>
    <property type="project" value="UniProtKB-KW"/>
</dbReference>
<dbReference type="GO" id="GO:0003735">
    <property type="term" value="F:structural constituent of ribosome"/>
    <property type="evidence" value="ECO:0007669"/>
    <property type="project" value="InterPro"/>
</dbReference>
<dbReference type="GO" id="GO:0006412">
    <property type="term" value="P:translation"/>
    <property type="evidence" value="ECO:0007669"/>
    <property type="project" value="UniProtKB-UniRule"/>
</dbReference>
<dbReference type="HAMAP" id="MF_00251">
    <property type="entry name" value="Ribosomal_bL36"/>
    <property type="match status" value="1"/>
</dbReference>
<dbReference type="InterPro" id="IPR000473">
    <property type="entry name" value="Ribosomal_bL36"/>
</dbReference>
<dbReference type="InterPro" id="IPR035977">
    <property type="entry name" value="Ribosomal_bL36_sp"/>
</dbReference>
<dbReference type="InterPro" id="IPR047621">
    <property type="entry name" value="Ribosomal_L36_bact"/>
</dbReference>
<dbReference type="NCBIfam" id="NF002021">
    <property type="entry name" value="PRK00831.1"/>
    <property type="match status" value="1"/>
</dbReference>
<dbReference type="NCBIfam" id="TIGR01022">
    <property type="entry name" value="rpmJ_bact"/>
    <property type="match status" value="1"/>
</dbReference>
<dbReference type="PANTHER" id="PTHR47781">
    <property type="entry name" value="50S RIBOSOMAL PROTEIN L36 2"/>
    <property type="match status" value="1"/>
</dbReference>
<dbReference type="PANTHER" id="PTHR47781:SF1">
    <property type="entry name" value="LARGE RIBOSOMAL SUBUNIT PROTEIN BL36B"/>
    <property type="match status" value="1"/>
</dbReference>
<dbReference type="Pfam" id="PF00444">
    <property type="entry name" value="Ribosomal_L36"/>
    <property type="match status" value="1"/>
</dbReference>
<dbReference type="SUPFAM" id="SSF57840">
    <property type="entry name" value="Ribosomal protein L36"/>
    <property type="match status" value="1"/>
</dbReference>
<dbReference type="PROSITE" id="PS00828">
    <property type="entry name" value="RIBOSOMAL_L36"/>
    <property type="match status" value="1"/>
</dbReference>
<accession>B4SSV0</accession>
<keyword id="KW-0687">Ribonucleoprotein</keyword>
<keyword id="KW-0689">Ribosomal protein</keyword>
<protein>
    <recommendedName>
        <fullName evidence="1">Large ribosomal subunit protein bL36</fullName>
    </recommendedName>
    <alternativeName>
        <fullName evidence="2">50S ribosomal protein L36</fullName>
    </alternativeName>
</protein>
<comment type="similarity">
    <text evidence="1">Belongs to the bacterial ribosomal protein bL36 family.</text>
</comment>
<sequence length="41" mass="4856">MKVLSSLKSAKARHRDCKVVRRRGKIFVICKSNPRFKARQR</sequence>
<reference key="1">
    <citation type="submission" date="2008-06" db="EMBL/GenBank/DDBJ databases">
        <title>Complete sequence of Stenotrophomonas maltophilia R551-3.</title>
        <authorList>
            <consortium name="US DOE Joint Genome Institute"/>
            <person name="Lucas S."/>
            <person name="Copeland A."/>
            <person name="Lapidus A."/>
            <person name="Glavina del Rio T."/>
            <person name="Dalin E."/>
            <person name="Tice H."/>
            <person name="Pitluck S."/>
            <person name="Chain P."/>
            <person name="Malfatti S."/>
            <person name="Shin M."/>
            <person name="Vergez L."/>
            <person name="Lang D."/>
            <person name="Schmutz J."/>
            <person name="Larimer F."/>
            <person name="Land M."/>
            <person name="Hauser L."/>
            <person name="Kyrpides N."/>
            <person name="Mikhailova N."/>
            <person name="Taghavi S."/>
            <person name="Monchy S."/>
            <person name="Newman L."/>
            <person name="Vangronsveld J."/>
            <person name="van der Lelie D."/>
            <person name="Richardson P."/>
        </authorList>
    </citation>
    <scope>NUCLEOTIDE SEQUENCE [LARGE SCALE GENOMIC DNA]</scope>
    <source>
        <strain>R551-3</strain>
    </source>
</reference>
<gene>
    <name evidence="1" type="primary">rpmJ</name>
    <name type="ordered locus">Smal_1644</name>
</gene>